<protein>
    <recommendedName>
        <fullName>NACHT, LRR and PYD domains-containing protein 4B</fullName>
    </recommendedName>
    <alternativeName>
        <fullName>NALP-gamma</fullName>
    </alternativeName>
</protein>
<proteinExistence type="evidence at transcript level"/>
<keyword id="KW-0067">ATP-binding</keyword>
<keyword id="KW-0395">Inflammatory response</keyword>
<keyword id="KW-0433">Leucine-rich repeat</keyword>
<keyword id="KW-0547">Nucleotide-binding</keyword>
<keyword id="KW-1185">Reference proteome</keyword>
<keyword id="KW-0677">Repeat</keyword>
<gene>
    <name type="primary">Nlrp4b</name>
    <name type="synonym">Nalp4b</name>
</gene>
<name>NAL4B_MOUSE</name>
<accession>Q8C6J9</accession>
<accession>Q66X16</accession>
<reference key="1">
    <citation type="journal article" date="2004" name="Hum. Mol. Genet.">
        <title>Age-associated alteration of gene expression patterns in mouse oocytes.</title>
        <authorList>
            <person name="Hamatani T."/>
            <person name="Falco G."/>
            <person name="Carter M.G."/>
            <person name="Akutsu H."/>
            <person name="Stagg C.A."/>
            <person name="Sharov A.A."/>
            <person name="Dudekula D.B."/>
            <person name="VanBuren V."/>
            <person name="Ko M.S.H."/>
        </authorList>
    </citation>
    <scope>NUCLEOTIDE SEQUENCE [MRNA]</scope>
    <source>
        <strain>C57BL/6J</strain>
    </source>
</reference>
<reference key="2">
    <citation type="submission" date="2003-07" db="EMBL/GenBank/DDBJ databases">
        <title>Murine NALPs: a family of proteins involved in inflammation.</title>
        <authorList>
            <person name="Martinon F."/>
            <person name="Hofmann K."/>
            <person name="Tschopp J."/>
        </authorList>
    </citation>
    <scope>NUCLEOTIDE SEQUENCE [MRNA]</scope>
    <source>
        <strain>C57BL/6J</strain>
    </source>
</reference>
<reference key="3">
    <citation type="journal article" date="2005" name="Science">
        <title>The transcriptional landscape of the mammalian genome.</title>
        <authorList>
            <person name="Carninci P."/>
            <person name="Kasukawa T."/>
            <person name="Katayama S."/>
            <person name="Gough J."/>
            <person name="Frith M.C."/>
            <person name="Maeda N."/>
            <person name="Oyama R."/>
            <person name="Ravasi T."/>
            <person name="Lenhard B."/>
            <person name="Wells C."/>
            <person name="Kodzius R."/>
            <person name="Shimokawa K."/>
            <person name="Bajic V.B."/>
            <person name="Brenner S.E."/>
            <person name="Batalov S."/>
            <person name="Forrest A.R."/>
            <person name="Zavolan M."/>
            <person name="Davis M.J."/>
            <person name="Wilming L.G."/>
            <person name="Aidinis V."/>
            <person name="Allen J.E."/>
            <person name="Ambesi-Impiombato A."/>
            <person name="Apweiler R."/>
            <person name="Aturaliya R.N."/>
            <person name="Bailey T.L."/>
            <person name="Bansal M."/>
            <person name="Baxter L."/>
            <person name="Beisel K.W."/>
            <person name="Bersano T."/>
            <person name="Bono H."/>
            <person name="Chalk A.M."/>
            <person name="Chiu K.P."/>
            <person name="Choudhary V."/>
            <person name="Christoffels A."/>
            <person name="Clutterbuck D.R."/>
            <person name="Crowe M.L."/>
            <person name="Dalla E."/>
            <person name="Dalrymple B.P."/>
            <person name="de Bono B."/>
            <person name="Della Gatta G."/>
            <person name="di Bernardo D."/>
            <person name="Down T."/>
            <person name="Engstrom P."/>
            <person name="Fagiolini M."/>
            <person name="Faulkner G."/>
            <person name="Fletcher C.F."/>
            <person name="Fukushima T."/>
            <person name="Furuno M."/>
            <person name="Futaki S."/>
            <person name="Gariboldi M."/>
            <person name="Georgii-Hemming P."/>
            <person name="Gingeras T.R."/>
            <person name="Gojobori T."/>
            <person name="Green R.E."/>
            <person name="Gustincich S."/>
            <person name="Harbers M."/>
            <person name="Hayashi Y."/>
            <person name="Hensch T.K."/>
            <person name="Hirokawa N."/>
            <person name="Hill D."/>
            <person name="Huminiecki L."/>
            <person name="Iacono M."/>
            <person name="Ikeo K."/>
            <person name="Iwama A."/>
            <person name="Ishikawa T."/>
            <person name="Jakt M."/>
            <person name="Kanapin A."/>
            <person name="Katoh M."/>
            <person name="Kawasawa Y."/>
            <person name="Kelso J."/>
            <person name="Kitamura H."/>
            <person name="Kitano H."/>
            <person name="Kollias G."/>
            <person name="Krishnan S.P."/>
            <person name="Kruger A."/>
            <person name="Kummerfeld S.K."/>
            <person name="Kurochkin I.V."/>
            <person name="Lareau L.F."/>
            <person name="Lazarevic D."/>
            <person name="Lipovich L."/>
            <person name="Liu J."/>
            <person name="Liuni S."/>
            <person name="McWilliam S."/>
            <person name="Madan Babu M."/>
            <person name="Madera M."/>
            <person name="Marchionni L."/>
            <person name="Matsuda H."/>
            <person name="Matsuzawa S."/>
            <person name="Miki H."/>
            <person name="Mignone F."/>
            <person name="Miyake S."/>
            <person name="Morris K."/>
            <person name="Mottagui-Tabar S."/>
            <person name="Mulder N."/>
            <person name="Nakano N."/>
            <person name="Nakauchi H."/>
            <person name="Ng P."/>
            <person name="Nilsson R."/>
            <person name="Nishiguchi S."/>
            <person name="Nishikawa S."/>
            <person name="Nori F."/>
            <person name="Ohara O."/>
            <person name="Okazaki Y."/>
            <person name="Orlando V."/>
            <person name="Pang K.C."/>
            <person name="Pavan W.J."/>
            <person name="Pavesi G."/>
            <person name="Pesole G."/>
            <person name="Petrovsky N."/>
            <person name="Piazza S."/>
            <person name="Reed J."/>
            <person name="Reid J.F."/>
            <person name="Ring B.Z."/>
            <person name="Ringwald M."/>
            <person name="Rost B."/>
            <person name="Ruan Y."/>
            <person name="Salzberg S.L."/>
            <person name="Sandelin A."/>
            <person name="Schneider C."/>
            <person name="Schoenbach C."/>
            <person name="Sekiguchi K."/>
            <person name="Semple C.A."/>
            <person name="Seno S."/>
            <person name="Sessa L."/>
            <person name="Sheng Y."/>
            <person name="Shibata Y."/>
            <person name="Shimada H."/>
            <person name="Shimada K."/>
            <person name="Silva D."/>
            <person name="Sinclair B."/>
            <person name="Sperling S."/>
            <person name="Stupka E."/>
            <person name="Sugiura K."/>
            <person name="Sultana R."/>
            <person name="Takenaka Y."/>
            <person name="Taki K."/>
            <person name="Tammoja K."/>
            <person name="Tan S.L."/>
            <person name="Tang S."/>
            <person name="Taylor M.S."/>
            <person name="Tegner J."/>
            <person name="Teichmann S.A."/>
            <person name="Ueda H.R."/>
            <person name="van Nimwegen E."/>
            <person name="Verardo R."/>
            <person name="Wei C.L."/>
            <person name="Yagi K."/>
            <person name="Yamanishi H."/>
            <person name="Zabarovsky E."/>
            <person name="Zhu S."/>
            <person name="Zimmer A."/>
            <person name="Hide W."/>
            <person name="Bult C."/>
            <person name="Grimmond S.M."/>
            <person name="Teasdale R.D."/>
            <person name="Liu E.T."/>
            <person name="Brusic V."/>
            <person name="Quackenbush J."/>
            <person name="Wahlestedt C."/>
            <person name="Mattick J.S."/>
            <person name="Hume D.A."/>
            <person name="Kai C."/>
            <person name="Sasaki D."/>
            <person name="Tomaru Y."/>
            <person name="Fukuda S."/>
            <person name="Kanamori-Katayama M."/>
            <person name="Suzuki M."/>
            <person name="Aoki J."/>
            <person name="Arakawa T."/>
            <person name="Iida J."/>
            <person name="Imamura K."/>
            <person name="Itoh M."/>
            <person name="Kato T."/>
            <person name="Kawaji H."/>
            <person name="Kawagashira N."/>
            <person name="Kawashima T."/>
            <person name="Kojima M."/>
            <person name="Kondo S."/>
            <person name="Konno H."/>
            <person name="Nakano K."/>
            <person name="Ninomiya N."/>
            <person name="Nishio T."/>
            <person name="Okada M."/>
            <person name="Plessy C."/>
            <person name="Shibata K."/>
            <person name="Shiraki T."/>
            <person name="Suzuki S."/>
            <person name="Tagami M."/>
            <person name="Waki K."/>
            <person name="Watahiki A."/>
            <person name="Okamura-Oho Y."/>
            <person name="Suzuki H."/>
            <person name="Kawai J."/>
            <person name="Hayashizaki Y."/>
        </authorList>
    </citation>
    <scope>NUCLEOTIDE SEQUENCE [LARGE SCALE MRNA]</scope>
    <source>
        <strain>C57BL/6J</strain>
        <tissue>Ovary</tissue>
    </source>
</reference>
<sequence>MASLFSDFGFIWYWKELNKIEFMYFKELLIHEILQMGLKQISWTEVKEASREDLAILLVKHCDGNQAWDTTFRVFQMIGRNVITNRATGEIAAHSTIYRAHLKEKLTHDCSRKFNISIQNFFQDEYDHLENLLVPNGTENNPKMVVLQGVAGIGKTILLKNLMIVWSEGLVFQNKFSYIFYFCCHDVKQLQTASLADLISREWPSPSAPMEEILSQPEKLLFIIDSLEGMEWNVTQQDSQLCYNCMEKQPVNVLLSSLLRKKILPESSLLISTSCETFKDLKDWIEYTNVRTITGFKENNINMCFHSLFQDRNIAQEAFSLIRENEQLFTVCQAPVVCYMVATCLKNEIESGKDPVSICRRTTSLYTTHILNLFIPHNAQNPSNNSEDLLDNLCFLAVEGMWTDISVFNEEALRRNGIMDSDIPTLLDIGILEQSRESENSYIFLHPSVQEFCAAMFYLLHSEMDHSCQGVYFIETFLFTFLNKIKKQWVFLGCFFFGLLHETEQEKLEAFFGYHLSKELRRQLFLWLELLLDTLHPDVKKINTMKFFYCLFEMEEEVFVQSAMNCREQIDVVVKGYSDFIVAAYCLSHGSALTDFSISAQNVLNEELGQRGKLLILWHQICSVFLRNKDIKTLRIEDTIFNEPVFKIFYSYLKNSSCILKTLVAYNVSFLCDKRLFLELIQSYNLEELYLRGTFLSHSDVEMLCDILNQAECNIRILDLANCSLCEHSWDYLSDVLRQNKSLRYLNISYNNLKDEGLKALCRALTLPNSALHSLSLEACQLTGACCKDLASTFTRYKCLRRINLAKNSLGFSGLFVLCKAMKDQTCTLYELKLRMADFDSDSQEFLLSEMERNKILSIENGV</sequence>
<comment type="function">
    <text evidence="1">May be involved in inflammation and recognition of cytosolic pathogen-associated molecular patterns (PAMPs) not intercepted by membrane-bound receptors.</text>
</comment>
<comment type="similarity">
    <text evidence="3">Belongs to the NLRP family.</text>
</comment>
<dbReference type="EMBL" id="AY596198">
    <property type="protein sequence ID" value="AAU06319.1"/>
    <property type="molecule type" value="mRNA"/>
</dbReference>
<dbReference type="EMBL" id="AY355342">
    <property type="protein sequence ID" value="AAR14739.1"/>
    <property type="molecule type" value="mRNA"/>
</dbReference>
<dbReference type="EMBL" id="AK054426">
    <property type="protein sequence ID" value="BAC35775.1"/>
    <property type="molecule type" value="mRNA"/>
</dbReference>
<dbReference type="CCDS" id="CCDS20795.1"/>
<dbReference type="RefSeq" id="NP_001342080.1">
    <property type="nucleotide sequence ID" value="NM_001355151.1"/>
</dbReference>
<dbReference type="RefSeq" id="NP_766069.1">
    <property type="nucleotide sequence ID" value="NM_172481.2"/>
</dbReference>
<dbReference type="RefSeq" id="XP_006539767.1">
    <property type="nucleotide sequence ID" value="XM_006539704.1"/>
</dbReference>
<dbReference type="SMR" id="Q8C6J9"/>
<dbReference type="STRING" id="10090.ENSMUSP00000113095"/>
<dbReference type="iPTMnet" id="Q8C6J9"/>
<dbReference type="PhosphoSitePlus" id="Q8C6J9"/>
<dbReference type="jPOST" id="Q8C6J9"/>
<dbReference type="PaxDb" id="10090-ENSMUSP00000113095"/>
<dbReference type="ProteomicsDB" id="287605"/>
<dbReference type="DNASU" id="210045"/>
<dbReference type="Ensembl" id="ENSMUST00000047809.11">
    <property type="protein sequence ID" value="ENSMUSP00000043881.5"/>
    <property type="gene ID" value="ENSMUSG00000034087.15"/>
</dbReference>
<dbReference type="Ensembl" id="ENSMUST00000117413.9">
    <property type="protein sequence ID" value="ENSMUSP00000113095.2"/>
    <property type="gene ID" value="ENSMUSG00000034087.15"/>
</dbReference>
<dbReference type="GeneID" id="210045"/>
<dbReference type="KEGG" id="mmu:210045"/>
<dbReference type="UCSC" id="uc009fdi.1">
    <property type="organism name" value="mouse"/>
</dbReference>
<dbReference type="AGR" id="MGI:3056570"/>
<dbReference type="CTD" id="210045"/>
<dbReference type="MGI" id="MGI:3056570">
    <property type="gene designation" value="Nlrp4b"/>
</dbReference>
<dbReference type="VEuPathDB" id="HostDB:ENSMUSG00000034087"/>
<dbReference type="eggNOG" id="KOG4308">
    <property type="taxonomic scope" value="Eukaryota"/>
</dbReference>
<dbReference type="GeneTree" id="ENSGT00940000162284"/>
<dbReference type="HOGENOM" id="CLU_002274_2_3_1"/>
<dbReference type="InParanoid" id="Q8C6J9"/>
<dbReference type="OMA" id="VICAYCL"/>
<dbReference type="OrthoDB" id="120976at2759"/>
<dbReference type="PhylomeDB" id="Q8C6J9"/>
<dbReference type="BioGRID-ORCS" id="210045">
    <property type="hits" value="0 hits in 79 CRISPR screens"/>
</dbReference>
<dbReference type="ChiTaRS" id="Nlrp4b">
    <property type="organism name" value="mouse"/>
</dbReference>
<dbReference type="PRO" id="PR:Q8C6J9"/>
<dbReference type="Proteomes" id="UP000000589">
    <property type="component" value="Chromosome 7"/>
</dbReference>
<dbReference type="RNAct" id="Q8C6J9">
    <property type="molecule type" value="protein"/>
</dbReference>
<dbReference type="Bgee" id="ENSMUSG00000034087">
    <property type="expression patterns" value="Expressed in primary oocyte and 7 other cell types or tissues"/>
</dbReference>
<dbReference type="ExpressionAtlas" id="Q8C6J9">
    <property type="expression patterns" value="baseline and differential"/>
</dbReference>
<dbReference type="GO" id="GO:0005524">
    <property type="term" value="F:ATP binding"/>
    <property type="evidence" value="ECO:0007669"/>
    <property type="project" value="UniProtKB-KW"/>
</dbReference>
<dbReference type="GO" id="GO:0006954">
    <property type="term" value="P:inflammatory response"/>
    <property type="evidence" value="ECO:0007669"/>
    <property type="project" value="UniProtKB-KW"/>
</dbReference>
<dbReference type="CDD" id="cd08320">
    <property type="entry name" value="Pyrin_NALPs"/>
    <property type="match status" value="1"/>
</dbReference>
<dbReference type="FunFam" id="3.40.50.300:FF:000442">
    <property type="entry name" value="NACHT, LRR and PYD domains-containing protein 3"/>
    <property type="match status" value="1"/>
</dbReference>
<dbReference type="Gene3D" id="1.10.533.10">
    <property type="entry name" value="Death Domain, Fas"/>
    <property type="match status" value="1"/>
</dbReference>
<dbReference type="Gene3D" id="3.40.50.300">
    <property type="entry name" value="P-loop containing nucleotide triphosphate hydrolases"/>
    <property type="match status" value="1"/>
</dbReference>
<dbReference type="Gene3D" id="3.80.10.10">
    <property type="entry name" value="Ribonuclease Inhibitor"/>
    <property type="match status" value="1"/>
</dbReference>
<dbReference type="InterPro" id="IPR004020">
    <property type="entry name" value="DAPIN"/>
</dbReference>
<dbReference type="InterPro" id="IPR011029">
    <property type="entry name" value="DEATH-like_dom_sf"/>
</dbReference>
<dbReference type="InterPro" id="IPR001611">
    <property type="entry name" value="Leu-rich_rpt"/>
</dbReference>
<dbReference type="InterPro" id="IPR032675">
    <property type="entry name" value="LRR_dom_sf"/>
</dbReference>
<dbReference type="InterPro" id="IPR007111">
    <property type="entry name" value="NACHT_NTPase"/>
</dbReference>
<dbReference type="InterPro" id="IPR041267">
    <property type="entry name" value="NLRP_HD2"/>
</dbReference>
<dbReference type="InterPro" id="IPR050637">
    <property type="entry name" value="NLRP_innate_immun_reg"/>
</dbReference>
<dbReference type="InterPro" id="IPR041075">
    <property type="entry name" value="NOD1/2_WH"/>
</dbReference>
<dbReference type="InterPro" id="IPR027417">
    <property type="entry name" value="P-loop_NTPase"/>
</dbReference>
<dbReference type="PANTHER" id="PTHR45690">
    <property type="entry name" value="NACHT, LRR AND PYD DOMAINS-CONTAINING PROTEIN 12"/>
    <property type="match status" value="1"/>
</dbReference>
<dbReference type="PANTHER" id="PTHR45690:SF12">
    <property type="entry name" value="NACHT, LRR AND PYD DOMAINS-CONTAINING PROTEIN 4B"/>
    <property type="match status" value="1"/>
</dbReference>
<dbReference type="Pfam" id="PF13516">
    <property type="entry name" value="LRR_6"/>
    <property type="match status" value="1"/>
</dbReference>
<dbReference type="Pfam" id="PF05729">
    <property type="entry name" value="NACHT"/>
    <property type="match status" value="1"/>
</dbReference>
<dbReference type="Pfam" id="PF17776">
    <property type="entry name" value="NLRC4_HD2"/>
    <property type="match status" value="1"/>
</dbReference>
<dbReference type="Pfam" id="PF17779">
    <property type="entry name" value="NOD2_WH"/>
    <property type="match status" value="1"/>
</dbReference>
<dbReference type="Pfam" id="PF02758">
    <property type="entry name" value="PYRIN"/>
    <property type="match status" value="1"/>
</dbReference>
<dbReference type="SMART" id="SM00368">
    <property type="entry name" value="LRR_RI"/>
    <property type="match status" value="5"/>
</dbReference>
<dbReference type="SMART" id="SM01289">
    <property type="entry name" value="PYRIN"/>
    <property type="match status" value="1"/>
</dbReference>
<dbReference type="SUPFAM" id="SSF47986">
    <property type="entry name" value="DEATH domain"/>
    <property type="match status" value="1"/>
</dbReference>
<dbReference type="SUPFAM" id="SSF52540">
    <property type="entry name" value="P-loop containing nucleoside triphosphate hydrolases"/>
    <property type="match status" value="1"/>
</dbReference>
<dbReference type="SUPFAM" id="SSF52047">
    <property type="entry name" value="RNI-like"/>
    <property type="match status" value="1"/>
</dbReference>
<dbReference type="PROSITE" id="PS51450">
    <property type="entry name" value="LRR"/>
    <property type="match status" value="2"/>
</dbReference>
<dbReference type="PROSITE" id="PS50837">
    <property type="entry name" value="NACHT"/>
    <property type="match status" value="1"/>
</dbReference>
<organism>
    <name type="scientific">Mus musculus</name>
    <name type="common">Mouse</name>
    <dbReference type="NCBI Taxonomy" id="10090"/>
    <lineage>
        <taxon>Eukaryota</taxon>
        <taxon>Metazoa</taxon>
        <taxon>Chordata</taxon>
        <taxon>Craniata</taxon>
        <taxon>Vertebrata</taxon>
        <taxon>Euteleostomi</taxon>
        <taxon>Mammalia</taxon>
        <taxon>Eutheria</taxon>
        <taxon>Euarchontoglires</taxon>
        <taxon>Glires</taxon>
        <taxon>Rodentia</taxon>
        <taxon>Myomorpha</taxon>
        <taxon>Muroidea</taxon>
        <taxon>Muridae</taxon>
        <taxon>Murinae</taxon>
        <taxon>Mus</taxon>
        <taxon>Mus</taxon>
    </lineage>
</organism>
<evidence type="ECO:0000250" key="1"/>
<evidence type="ECO:0000255" key="2">
    <source>
        <dbReference type="PROSITE-ProRule" id="PRU00136"/>
    </source>
</evidence>
<evidence type="ECO:0000305" key="3"/>
<feature type="chain" id="PRO_0000286330" description="NACHT, LRR and PYD domains-containing protein 4B">
    <location>
        <begin position="1"/>
        <end position="863"/>
    </location>
</feature>
<feature type="domain" description="Pyrin">
    <location>
        <begin position="1"/>
        <end position="93"/>
    </location>
</feature>
<feature type="domain" description="NACHT" evidence="2">
    <location>
        <begin position="143"/>
        <end position="466"/>
    </location>
</feature>
<feature type="repeat" description="LRR 1">
    <location>
        <begin position="618"/>
        <end position="643"/>
    </location>
</feature>
<feature type="repeat" description="LRR 2">
    <location>
        <begin position="683"/>
        <end position="706"/>
    </location>
</feature>
<feature type="repeat" description="LRR 3">
    <location>
        <begin position="717"/>
        <end position="740"/>
    </location>
</feature>
<feature type="repeat" description="LRR 4">
    <location>
        <begin position="741"/>
        <end position="763"/>
    </location>
</feature>
<feature type="repeat" description="LRR 5">
    <location>
        <begin position="765"/>
        <end position="782"/>
    </location>
</feature>
<feature type="repeat" description="LRR 6">
    <location>
        <begin position="797"/>
        <end position="824"/>
    </location>
</feature>
<feature type="repeat" description="LRR 7">
    <location>
        <begin position="843"/>
        <end position="863"/>
    </location>
</feature>
<feature type="binding site" evidence="2">
    <location>
        <begin position="149"/>
        <end position="156"/>
    </location>
    <ligand>
        <name>ATP</name>
        <dbReference type="ChEBI" id="CHEBI:30616"/>
    </ligand>
</feature>
<feature type="sequence conflict" description="In Ref. 1; AAU06319." evidence="3" ref="1">
    <original>S</original>
    <variation>L</variation>
    <location>
        <position position="6"/>
    </location>
</feature>
<feature type="sequence conflict" description="In Ref. 1; AAU06319." evidence="3" ref="1">
    <original>S</original>
    <variation>C</variation>
    <location>
        <position position="657"/>
    </location>
</feature>